<accession>A0A0E4AFH6</accession>
<reference key="1">
    <citation type="journal article" date="2015" name="J. Biotechnol.">
        <title>Complete genome sequence of Rhodococcus erythropolis BG43 (DSM 46869), a degrader of Pseudomonas aeruginosa quorum sensing signal molecules.</title>
        <authorList>
            <person name="Rueckert C."/>
            <person name="Birmes F.S."/>
            <person name="Mueller C."/>
            <person name="Niewerth H."/>
            <person name="Winkler A."/>
            <person name="Fetzner S."/>
            <person name="Kalinowski J."/>
        </authorList>
    </citation>
    <scope>NUCLEOTIDE SEQUENCE [LARGE SCALE GENOMIC DNA]</scope>
    <source>
        <strain>DSM 46869 / BG43</strain>
    </source>
</reference>
<reference key="2">
    <citation type="journal article" date="2015" name="Appl. Environ. Microbiol.">
        <title>Rhodococcus erythropolis BG43 genes mediating Pseudomonas aeruginosa quinolone signal degradation and virulence factor attenuation.</title>
        <authorList>
            <person name="Mueller C."/>
            <person name="Birmes F.S."/>
            <person name="Rueckert C."/>
            <person name="Kalinowski J."/>
            <person name="Fetzner S."/>
        </authorList>
    </citation>
    <scope>FUNCTION</scope>
    <scope>CATALYTIC ACTIVITY</scope>
    <scope>INDUCTION</scope>
    <source>
        <strain>DSM 46869 / BG43</strain>
    </source>
</reference>
<comment type="function">
    <text evidence="1">Involved in the degradation of the Pseudomonas aeruginosa quorum sensing signal molecule HHQ (2-heptyl-4-quinolone) to anthranilic acid. Probably catalyzes the hydroxylation of HHQ to PQS (2-heptyl-3-hydroxy-4-quinolone).</text>
</comment>
<comment type="catalytic activity">
    <reaction evidence="4">
        <text>2-heptyl-4(1H)-quinolone + NADH + O2 + H(+) = 2-heptyl-3-hydroxy-4(1H)-quinolone + NAD(+) + H2O</text>
        <dbReference type="Rhea" id="RHEA:37871"/>
        <dbReference type="ChEBI" id="CHEBI:15377"/>
        <dbReference type="ChEBI" id="CHEBI:15378"/>
        <dbReference type="ChEBI" id="CHEBI:15379"/>
        <dbReference type="ChEBI" id="CHEBI:29472"/>
        <dbReference type="ChEBI" id="CHEBI:57540"/>
        <dbReference type="ChEBI" id="CHEBI:57945"/>
        <dbReference type="ChEBI" id="CHEBI:62219"/>
        <dbReference type="EC" id="1.14.13.182"/>
    </reaction>
    <physiologicalReaction direction="left-to-right" evidence="4">
        <dbReference type="Rhea" id="RHEA:37872"/>
    </physiologicalReaction>
</comment>
<comment type="induction">
    <text evidence="1">Up-regulated by PQS.</text>
</comment>
<comment type="similarity">
    <text evidence="3">Belongs to the 3-hydroxybenzoate 6-hydroxylase family.</text>
</comment>
<organism>
    <name type="scientific">Rhodococcus erythropolis</name>
    <name type="common">Arthrobacter picolinophilus</name>
    <dbReference type="NCBI Taxonomy" id="1833"/>
    <lineage>
        <taxon>Bacteria</taxon>
        <taxon>Bacillati</taxon>
        <taxon>Actinomycetota</taxon>
        <taxon>Actinomycetes</taxon>
        <taxon>Mycobacteriales</taxon>
        <taxon>Nocardiaceae</taxon>
        <taxon>Rhodococcus</taxon>
        <taxon>Rhodococcus erythropolis group</taxon>
    </lineage>
</organism>
<sequence length="384" mass="41671">MTQRNAIVVGGGIGGLTAASALARQGWRVQLHERQPEIRAVGAGIYIWDNGLFALDAVHAYSEAIEGAHEPPSIDMRGQSGKTLMRIKINGESQPRCLTLLRDQLIKALVNAAKDAGVELVTNSSVVAVRPEGEVHFEHGDHSTTDLVVVADGVHSRLRDSVDLSYSRIRMSQGAARIMIPQSSHELPAEDRGRILESFHGSRRLLYTPCTPELVYLAFTCDSDDPAISGAYINTSEWSRSFPTLSDALRATEGVPATRWDTFEYVRLASWSRGKVAFLGDAAHAQPPYLGQGGGTAMTNAIALANAVSSDMELSEALATWERITRPGIESTQRTSYQQRLLNYVPDRVRNPLVRIAGLTSNVAKSQLKATEIRPTLGSTGGSR</sequence>
<feature type="chain" id="PRO_0000447582" description="Probable 2-heptyl-3-hydroxy-4(1H)-quinolone synthase AqdB2">
    <location>
        <begin position="1"/>
        <end position="384"/>
    </location>
</feature>
<name>AQDB2_RHOER</name>
<evidence type="ECO:0000269" key="1">
    <source>
    </source>
</evidence>
<evidence type="ECO:0000303" key="2">
    <source>
    </source>
</evidence>
<evidence type="ECO:0000305" key="3"/>
<evidence type="ECO:0000305" key="4">
    <source>
    </source>
</evidence>
<evidence type="ECO:0000312" key="5">
    <source>
        <dbReference type="EMBL" id="AKE01141.1"/>
    </source>
</evidence>
<geneLocation type="plasmid">
    <name>pRLCBG43</name>
</geneLocation>
<dbReference type="EC" id="1.14.13.182" evidence="4"/>
<dbReference type="EMBL" id="CP011296">
    <property type="protein sequence ID" value="AKE01141.1"/>
    <property type="molecule type" value="Genomic_DNA"/>
</dbReference>
<dbReference type="RefSeq" id="WP_046380184.1">
    <property type="nucleotide sequence ID" value="NZ_CP011296.1"/>
</dbReference>
<dbReference type="SMR" id="A0A0E4AFH6"/>
<dbReference type="KEGG" id="reb:XU06_29735"/>
<dbReference type="PATRIC" id="fig|1833.80.peg.6124"/>
<dbReference type="GO" id="GO:0102164">
    <property type="term" value="F:2-heptyl-3-hydroxy-4(1H)-quinolone synthase activity"/>
    <property type="evidence" value="ECO:0007669"/>
    <property type="project" value="UniProtKB-EC"/>
</dbReference>
<dbReference type="GO" id="GO:0071949">
    <property type="term" value="F:FAD binding"/>
    <property type="evidence" value="ECO:0007669"/>
    <property type="project" value="InterPro"/>
</dbReference>
<dbReference type="Gene3D" id="3.30.9.10">
    <property type="entry name" value="D-Amino Acid Oxidase, subunit A, domain 2"/>
    <property type="match status" value="1"/>
</dbReference>
<dbReference type="Gene3D" id="3.50.50.60">
    <property type="entry name" value="FAD/NAD(P)-binding domain"/>
    <property type="match status" value="1"/>
</dbReference>
<dbReference type="InterPro" id="IPR002938">
    <property type="entry name" value="FAD-bd"/>
</dbReference>
<dbReference type="InterPro" id="IPR050493">
    <property type="entry name" value="FAD-dep_Monooxygenase_BioMet"/>
</dbReference>
<dbReference type="InterPro" id="IPR036188">
    <property type="entry name" value="FAD/NAD-bd_sf"/>
</dbReference>
<dbReference type="PANTHER" id="PTHR13789">
    <property type="entry name" value="MONOOXYGENASE"/>
    <property type="match status" value="1"/>
</dbReference>
<dbReference type="PANTHER" id="PTHR13789:SF309">
    <property type="entry name" value="PUTATIVE (AFU_ORTHOLOGUE AFUA_6G14510)-RELATED"/>
    <property type="match status" value="1"/>
</dbReference>
<dbReference type="Pfam" id="PF01494">
    <property type="entry name" value="FAD_binding_3"/>
    <property type="match status" value="1"/>
</dbReference>
<dbReference type="PRINTS" id="PR00420">
    <property type="entry name" value="RNGMNOXGNASE"/>
</dbReference>
<dbReference type="SUPFAM" id="SSF51905">
    <property type="entry name" value="FAD/NAD(P)-binding domain"/>
    <property type="match status" value="1"/>
</dbReference>
<gene>
    <name evidence="2" type="primary">aqdB2</name>
    <name evidence="5" type="ORF">XU06_29735</name>
</gene>
<keyword id="KW-0503">Monooxygenase</keyword>
<keyword id="KW-0520">NAD</keyword>
<keyword id="KW-0560">Oxidoreductase</keyword>
<keyword id="KW-0614">Plasmid</keyword>
<protein>
    <recommendedName>
        <fullName evidence="3">Probable 2-heptyl-3-hydroxy-4(1H)-quinolone synthase AqdB2</fullName>
        <ecNumber evidence="4">1.14.13.182</ecNumber>
    </recommendedName>
    <alternativeName>
        <fullName evidence="3">2-heptyl-4-quinolone monooxygenase</fullName>
        <shortName evidence="3">HHQ monooxygenase</shortName>
    </alternativeName>
</protein>
<proteinExistence type="evidence at protein level"/>